<protein>
    <recommendedName>
        <fullName evidence="1">AMP phosphorylase</fullName>
        <shortName evidence="1">AMPpase</shortName>
        <ecNumber evidence="1">2.4.2.57</ecNumber>
    </recommendedName>
    <alternativeName>
        <fullName evidence="1">Nucleoside monophosphate phosphorylase</fullName>
        <shortName evidence="1">NMP phosphorylase</shortName>
    </alternativeName>
</protein>
<gene>
    <name type="ordered locus">MmarC7_1329</name>
</gene>
<dbReference type="EC" id="2.4.2.57" evidence="1"/>
<dbReference type="EMBL" id="CP000745">
    <property type="protein sequence ID" value="ABR66392.1"/>
    <property type="molecule type" value="Genomic_DNA"/>
</dbReference>
<dbReference type="SMR" id="A6VIW6"/>
<dbReference type="STRING" id="426368.MmarC7_1329"/>
<dbReference type="KEGG" id="mmz:MmarC7_1329"/>
<dbReference type="eggNOG" id="arCOG02013">
    <property type="taxonomic scope" value="Archaea"/>
</dbReference>
<dbReference type="HOGENOM" id="CLU_025040_6_0_2"/>
<dbReference type="OrthoDB" id="9827at2157"/>
<dbReference type="GO" id="GO:0005829">
    <property type="term" value="C:cytosol"/>
    <property type="evidence" value="ECO:0007669"/>
    <property type="project" value="TreeGrafter"/>
</dbReference>
<dbReference type="GO" id="GO:0004645">
    <property type="term" value="F:1,4-alpha-oligoglucan phosphorylase activity"/>
    <property type="evidence" value="ECO:0007669"/>
    <property type="project" value="InterPro"/>
</dbReference>
<dbReference type="GO" id="GO:0016208">
    <property type="term" value="F:AMP binding"/>
    <property type="evidence" value="ECO:0007669"/>
    <property type="project" value="UniProtKB-UniRule"/>
</dbReference>
<dbReference type="GO" id="GO:0016763">
    <property type="term" value="F:pentosyltransferase activity"/>
    <property type="evidence" value="ECO:0007669"/>
    <property type="project" value="UniProtKB-UniRule"/>
</dbReference>
<dbReference type="GO" id="GO:0006196">
    <property type="term" value="P:AMP catabolic process"/>
    <property type="evidence" value="ECO:0007669"/>
    <property type="project" value="UniProtKB-UniRule"/>
</dbReference>
<dbReference type="GO" id="GO:0046125">
    <property type="term" value="P:pyrimidine deoxyribonucleoside metabolic process"/>
    <property type="evidence" value="ECO:0007669"/>
    <property type="project" value="InterPro"/>
</dbReference>
<dbReference type="GO" id="GO:0006206">
    <property type="term" value="P:pyrimidine nucleobase metabolic process"/>
    <property type="evidence" value="ECO:0007669"/>
    <property type="project" value="InterPro"/>
</dbReference>
<dbReference type="Gene3D" id="1.20.970.50">
    <property type="match status" value="1"/>
</dbReference>
<dbReference type="Gene3D" id="2.40.40.20">
    <property type="match status" value="1"/>
</dbReference>
<dbReference type="Gene3D" id="3.40.1030.10">
    <property type="entry name" value="Nucleoside phosphorylase/phosphoribosyltransferase catalytic domain"/>
    <property type="match status" value="1"/>
</dbReference>
<dbReference type="Gene3D" id="3.90.1170.30">
    <property type="entry name" value="Pyrimidine nucleoside phosphorylase-like, C-terminal domain"/>
    <property type="match status" value="1"/>
</dbReference>
<dbReference type="HAMAP" id="MF_02132">
    <property type="entry name" value="AMP_phosphorylase"/>
    <property type="match status" value="1"/>
</dbReference>
<dbReference type="InterPro" id="IPR017713">
    <property type="entry name" value="AMP_phosphorylase"/>
</dbReference>
<dbReference type="InterPro" id="IPR000312">
    <property type="entry name" value="Glycosyl_Trfase_fam3"/>
</dbReference>
<dbReference type="InterPro" id="IPR017459">
    <property type="entry name" value="Glycosyl_Trfase_fam3_N_dom"/>
</dbReference>
<dbReference type="InterPro" id="IPR036320">
    <property type="entry name" value="Glycosyl_Trfase_fam3_N_dom_sf"/>
</dbReference>
<dbReference type="InterPro" id="IPR035902">
    <property type="entry name" value="Nuc_phospho_transferase"/>
</dbReference>
<dbReference type="InterPro" id="IPR036566">
    <property type="entry name" value="PYNP-like_C_sf"/>
</dbReference>
<dbReference type="InterPro" id="IPR013102">
    <property type="entry name" value="PYNP_C"/>
</dbReference>
<dbReference type="InterPro" id="IPR017872">
    <property type="entry name" value="Pyrmidine_PPase_CS"/>
</dbReference>
<dbReference type="InterPro" id="IPR013466">
    <property type="entry name" value="Thymidine/AMP_Pase"/>
</dbReference>
<dbReference type="InterPro" id="IPR000053">
    <property type="entry name" value="Thymidine/pyrmidine_PPase"/>
</dbReference>
<dbReference type="NCBIfam" id="TIGR03327">
    <property type="entry name" value="AMP_phos"/>
    <property type="match status" value="1"/>
</dbReference>
<dbReference type="NCBIfam" id="TIGR02645">
    <property type="entry name" value="ARCH_P_rylase"/>
    <property type="match status" value="1"/>
</dbReference>
<dbReference type="NCBIfam" id="NF003338">
    <property type="entry name" value="PRK04350.1"/>
    <property type="match status" value="1"/>
</dbReference>
<dbReference type="PANTHER" id="PTHR10515">
    <property type="entry name" value="THYMIDINE PHOSPHORYLASE"/>
    <property type="match status" value="1"/>
</dbReference>
<dbReference type="PANTHER" id="PTHR10515:SF0">
    <property type="entry name" value="THYMIDINE PHOSPHORYLASE"/>
    <property type="match status" value="1"/>
</dbReference>
<dbReference type="Pfam" id="PF02885">
    <property type="entry name" value="Glycos_trans_3N"/>
    <property type="match status" value="1"/>
</dbReference>
<dbReference type="Pfam" id="PF00591">
    <property type="entry name" value="Glycos_transf_3"/>
    <property type="match status" value="1"/>
</dbReference>
<dbReference type="Pfam" id="PF07831">
    <property type="entry name" value="PYNP_C"/>
    <property type="match status" value="1"/>
</dbReference>
<dbReference type="PIRSF" id="PIRSF000478">
    <property type="entry name" value="TP_PyNP"/>
    <property type="match status" value="1"/>
</dbReference>
<dbReference type="SMART" id="SM00941">
    <property type="entry name" value="PYNP_C"/>
    <property type="match status" value="1"/>
</dbReference>
<dbReference type="SUPFAM" id="SSF52418">
    <property type="entry name" value="Nucleoside phosphorylase/phosphoribosyltransferase catalytic domain"/>
    <property type="match status" value="1"/>
</dbReference>
<dbReference type="SUPFAM" id="SSF47648">
    <property type="entry name" value="Nucleoside phosphorylase/phosphoribosyltransferase N-terminal domain"/>
    <property type="match status" value="1"/>
</dbReference>
<dbReference type="SUPFAM" id="SSF54680">
    <property type="entry name" value="Pyrimidine nucleoside phosphorylase C-terminal domain"/>
    <property type="match status" value="1"/>
</dbReference>
<dbReference type="PROSITE" id="PS00647">
    <property type="entry name" value="THYMID_PHOSPHORYLASE"/>
    <property type="match status" value="1"/>
</dbReference>
<comment type="function">
    <text evidence="1">Catalyzes the conversion of AMP and phosphate to adenine and ribose 1,5-bisphosphate (R15P). Exhibits phosphorylase activity toward CMP and UMP in addition to AMP. Functions in an archaeal AMP degradation pathway, together with R15P isomerase and RubisCO.</text>
</comment>
<comment type="catalytic activity">
    <reaction evidence="1">
        <text>AMP + phosphate = alpha-D-ribose 1,5-bisphosphate + adenine</text>
        <dbReference type="Rhea" id="RHEA:36975"/>
        <dbReference type="ChEBI" id="CHEBI:16708"/>
        <dbReference type="ChEBI" id="CHEBI:43474"/>
        <dbReference type="ChEBI" id="CHEBI:68688"/>
        <dbReference type="ChEBI" id="CHEBI:456215"/>
        <dbReference type="EC" id="2.4.2.57"/>
    </reaction>
</comment>
<comment type="catalytic activity">
    <reaction evidence="1">
        <text>CMP + phosphate = cytosine + alpha-D-ribose 1,5-bisphosphate</text>
        <dbReference type="Rhea" id="RHEA:36987"/>
        <dbReference type="ChEBI" id="CHEBI:16040"/>
        <dbReference type="ChEBI" id="CHEBI:43474"/>
        <dbReference type="ChEBI" id="CHEBI:60377"/>
        <dbReference type="ChEBI" id="CHEBI:68688"/>
        <dbReference type="EC" id="2.4.2.57"/>
    </reaction>
</comment>
<comment type="catalytic activity">
    <reaction evidence="1">
        <text>UMP + phosphate = alpha-D-ribose 1,5-bisphosphate + uracil</text>
        <dbReference type="Rhea" id="RHEA:36991"/>
        <dbReference type="ChEBI" id="CHEBI:17568"/>
        <dbReference type="ChEBI" id="CHEBI:43474"/>
        <dbReference type="ChEBI" id="CHEBI:57865"/>
        <dbReference type="ChEBI" id="CHEBI:68688"/>
        <dbReference type="EC" id="2.4.2.57"/>
    </reaction>
</comment>
<comment type="similarity">
    <text evidence="1">Belongs to the thymidine/pyrimidine-nucleoside phosphorylase family. Type 2 subfamily.</text>
</comment>
<proteinExistence type="inferred from homology"/>
<name>AMPPA_METM7</name>
<reference key="1">
    <citation type="submission" date="2007-06" db="EMBL/GenBank/DDBJ databases">
        <title>Complete sequence of Methanococcus maripaludis C7.</title>
        <authorList>
            <consortium name="US DOE Joint Genome Institute"/>
            <person name="Copeland A."/>
            <person name="Lucas S."/>
            <person name="Lapidus A."/>
            <person name="Barry K."/>
            <person name="Glavina del Rio T."/>
            <person name="Dalin E."/>
            <person name="Tice H."/>
            <person name="Pitluck S."/>
            <person name="Clum A."/>
            <person name="Schmutz J."/>
            <person name="Larimer F."/>
            <person name="Land M."/>
            <person name="Hauser L."/>
            <person name="Kyrpides N."/>
            <person name="Anderson I."/>
            <person name="Sieprawska-Lupa M."/>
            <person name="Whitman W.B."/>
            <person name="Richardson P."/>
        </authorList>
    </citation>
    <scope>NUCLEOTIDE SEQUENCE [LARGE SCALE GENOMIC DNA]</scope>
    <source>
        <strain>C7 / ATCC BAA-1331</strain>
    </source>
</reference>
<evidence type="ECO:0000255" key="1">
    <source>
        <dbReference type="HAMAP-Rule" id="MF_02132"/>
    </source>
</evidence>
<feature type="chain" id="PRO_0000314724" description="AMP phosphorylase">
    <location>
        <begin position="1"/>
        <end position="505"/>
    </location>
</feature>
<feature type="active site" description="Proton donor" evidence="1">
    <location>
        <position position="258"/>
    </location>
</feature>
<feature type="binding site" evidence="1">
    <location>
        <position position="170"/>
    </location>
    <ligand>
        <name>AMP</name>
        <dbReference type="ChEBI" id="CHEBI:456215"/>
    </ligand>
</feature>
<feature type="binding site" evidence="1">
    <location>
        <begin position="196"/>
        <end position="201"/>
    </location>
    <ligand>
        <name>AMP</name>
        <dbReference type="ChEBI" id="CHEBI:456215"/>
    </ligand>
</feature>
<feature type="binding site" evidence="1">
    <location>
        <position position="205"/>
    </location>
    <ligand>
        <name>AMP</name>
        <dbReference type="ChEBI" id="CHEBI:456215"/>
    </ligand>
</feature>
<feature type="binding site" evidence="1">
    <location>
        <position position="266"/>
    </location>
    <ligand>
        <name>AMP</name>
        <dbReference type="ChEBI" id="CHEBI:456215"/>
    </ligand>
</feature>
<feature type="binding site" evidence="1">
    <location>
        <position position="290"/>
    </location>
    <ligand>
        <name>AMP</name>
        <dbReference type="ChEBI" id="CHEBI:456215"/>
    </ligand>
</feature>
<organism>
    <name type="scientific">Methanococcus maripaludis (strain C7 / ATCC BAA-1331)</name>
    <dbReference type="NCBI Taxonomy" id="426368"/>
    <lineage>
        <taxon>Archaea</taxon>
        <taxon>Methanobacteriati</taxon>
        <taxon>Methanobacteriota</taxon>
        <taxon>Methanomada group</taxon>
        <taxon>Methanococci</taxon>
        <taxon>Methanococcales</taxon>
        <taxon>Methanococcaceae</taxon>
        <taxon>Methanococcus</taxon>
    </lineage>
</organism>
<sequence>MLFLNAKFIDLDLGESAVIVNEEDLKGTSYYPQDRVLIESHAGSVIGNIYSTKTMVQKGEVGMLVSELSEISISEGEEVKLRHAEKPESIPFIKKKMDGQVLNPHEIRTIIDEIVSKKLSNIELSAFVSSTYINGMNMDEISEMTKRIAETGDMISWEKSLVVDIHSIGGVPGNKYALLSIPILAAAGITVPKTSSRAITSPAGTADVMEVLTNVELKEEEIKRIVKTTNGCLAWGGGVNLAPADDIIINVERPVSIDPQPQLLASVMAKKIATGIKYTVIDIPVGKGVKIKNEAEGAKLARKFIELGEMLNIKVECVLTYGGQPLGRAIGPALEAKEAIESLQDPKNAPKSLIEKSLSLAGILLELGGAAQIGEGQNLAWEILESGKALEKFNQIIVEQGGTPKKPEEIELGEYVEEILAPIDGYITDISNTAITNVVKEAGAPRDKKAGILLNSKIGNKVTQGDVLYTIYSGSEERLISAVNLARRVYPVKVEGMLIERISKF</sequence>
<keyword id="KW-0328">Glycosyltransferase</keyword>
<keyword id="KW-0808">Transferase</keyword>
<accession>A6VIW6</accession>